<reference key="1">
    <citation type="journal article" date="2004" name="Nat. Genet.">
        <title>Complete sequencing and characterization of 21,243 full-length human cDNAs.</title>
        <authorList>
            <person name="Ota T."/>
            <person name="Suzuki Y."/>
            <person name="Nishikawa T."/>
            <person name="Otsuki T."/>
            <person name="Sugiyama T."/>
            <person name="Irie R."/>
            <person name="Wakamatsu A."/>
            <person name="Hayashi K."/>
            <person name="Sato H."/>
            <person name="Nagai K."/>
            <person name="Kimura K."/>
            <person name="Makita H."/>
            <person name="Sekine M."/>
            <person name="Obayashi M."/>
            <person name="Nishi T."/>
            <person name="Shibahara T."/>
            <person name="Tanaka T."/>
            <person name="Ishii S."/>
            <person name="Yamamoto J."/>
            <person name="Saito K."/>
            <person name="Kawai Y."/>
            <person name="Isono Y."/>
            <person name="Nakamura Y."/>
            <person name="Nagahari K."/>
            <person name="Murakami K."/>
            <person name="Yasuda T."/>
            <person name="Iwayanagi T."/>
            <person name="Wagatsuma M."/>
            <person name="Shiratori A."/>
            <person name="Sudo H."/>
            <person name="Hosoiri T."/>
            <person name="Kaku Y."/>
            <person name="Kodaira H."/>
            <person name="Kondo H."/>
            <person name="Sugawara M."/>
            <person name="Takahashi M."/>
            <person name="Kanda K."/>
            <person name="Yokoi T."/>
            <person name="Furuya T."/>
            <person name="Kikkawa E."/>
            <person name="Omura Y."/>
            <person name="Abe K."/>
            <person name="Kamihara K."/>
            <person name="Katsuta N."/>
            <person name="Sato K."/>
            <person name="Tanikawa M."/>
            <person name="Yamazaki M."/>
            <person name="Ninomiya K."/>
            <person name="Ishibashi T."/>
            <person name="Yamashita H."/>
            <person name="Murakawa K."/>
            <person name="Fujimori K."/>
            <person name="Tanai H."/>
            <person name="Kimata M."/>
            <person name="Watanabe M."/>
            <person name="Hiraoka S."/>
            <person name="Chiba Y."/>
            <person name="Ishida S."/>
            <person name="Ono Y."/>
            <person name="Takiguchi S."/>
            <person name="Watanabe S."/>
            <person name="Yosida M."/>
            <person name="Hotuta T."/>
            <person name="Kusano J."/>
            <person name="Kanehori K."/>
            <person name="Takahashi-Fujii A."/>
            <person name="Hara H."/>
            <person name="Tanase T.-O."/>
            <person name="Nomura Y."/>
            <person name="Togiya S."/>
            <person name="Komai F."/>
            <person name="Hara R."/>
            <person name="Takeuchi K."/>
            <person name="Arita M."/>
            <person name="Imose N."/>
            <person name="Musashino K."/>
            <person name="Yuuki H."/>
            <person name="Oshima A."/>
            <person name="Sasaki N."/>
            <person name="Aotsuka S."/>
            <person name="Yoshikawa Y."/>
            <person name="Matsunawa H."/>
            <person name="Ichihara T."/>
            <person name="Shiohata N."/>
            <person name="Sano S."/>
            <person name="Moriya S."/>
            <person name="Momiyama H."/>
            <person name="Satoh N."/>
            <person name="Takami S."/>
            <person name="Terashima Y."/>
            <person name="Suzuki O."/>
            <person name="Nakagawa S."/>
            <person name="Senoh A."/>
            <person name="Mizoguchi H."/>
            <person name="Goto Y."/>
            <person name="Shimizu F."/>
            <person name="Wakebe H."/>
            <person name="Hishigaki H."/>
            <person name="Watanabe T."/>
            <person name="Sugiyama A."/>
            <person name="Takemoto M."/>
            <person name="Kawakami B."/>
            <person name="Yamazaki M."/>
            <person name="Watanabe K."/>
            <person name="Kumagai A."/>
            <person name="Itakura S."/>
            <person name="Fukuzumi Y."/>
            <person name="Fujimori Y."/>
            <person name="Komiyama M."/>
            <person name="Tashiro H."/>
            <person name="Tanigami A."/>
            <person name="Fujiwara T."/>
            <person name="Ono T."/>
            <person name="Yamada K."/>
            <person name="Fujii Y."/>
            <person name="Ozaki K."/>
            <person name="Hirao M."/>
            <person name="Ohmori Y."/>
            <person name="Kawabata A."/>
            <person name="Hikiji T."/>
            <person name="Kobatake N."/>
            <person name="Inagaki H."/>
            <person name="Ikema Y."/>
            <person name="Okamoto S."/>
            <person name="Okitani R."/>
            <person name="Kawakami T."/>
            <person name="Noguchi S."/>
            <person name="Itoh T."/>
            <person name="Shigeta K."/>
            <person name="Senba T."/>
            <person name="Matsumura K."/>
            <person name="Nakajima Y."/>
            <person name="Mizuno T."/>
            <person name="Morinaga M."/>
            <person name="Sasaki M."/>
            <person name="Togashi T."/>
            <person name="Oyama M."/>
            <person name="Hata H."/>
            <person name="Watanabe M."/>
            <person name="Komatsu T."/>
            <person name="Mizushima-Sugano J."/>
            <person name="Satoh T."/>
            <person name="Shirai Y."/>
            <person name="Takahashi Y."/>
            <person name="Nakagawa K."/>
            <person name="Okumura K."/>
            <person name="Nagase T."/>
            <person name="Nomura N."/>
            <person name="Kikuchi H."/>
            <person name="Masuho Y."/>
            <person name="Yamashita R."/>
            <person name="Nakai K."/>
            <person name="Yada T."/>
            <person name="Nakamura Y."/>
            <person name="Ohara O."/>
            <person name="Isogai T."/>
            <person name="Sugano S."/>
        </authorList>
    </citation>
    <scope>NUCLEOTIDE SEQUENCE [LARGE SCALE MRNA] (ISOFORM 3)</scope>
    <scope>NUCLEOTIDE SEQUENCE [LARGE SCALE MRNA] OF 266-1437 (ISOFORM 1)</scope>
    <scope>VARIANTS MET-266; THR-344; ARG-435; GLY-528 AND ARG-662</scope>
    <source>
        <tissue>Testis</tissue>
    </source>
</reference>
<reference key="2">
    <citation type="journal article" date="2006" name="Nature">
        <title>The DNA sequence and biological annotation of human chromosome 1.</title>
        <authorList>
            <person name="Gregory S.G."/>
            <person name="Barlow K.F."/>
            <person name="McLay K.E."/>
            <person name="Kaul R."/>
            <person name="Swarbreck D."/>
            <person name="Dunham A."/>
            <person name="Scott C.E."/>
            <person name="Howe K.L."/>
            <person name="Woodfine K."/>
            <person name="Spencer C.C.A."/>
            <person name="Jones M.C."/>
            <person name="Gillson C."/>
            <person name="Searle S."/>
            <person name="Zhou Y."/>
            <person name="Kokocinski F."/>
            <person name="McDonald L."/>
            <person name="Evans R."/>
            <person name="Phillips K."/>
            <person name="Atkinson A."/>
            <person name="Cooper R."/>
            <person name="Jones C."/>
            <person name="Hall R.E."/>
            <person name="Andrews T.D."/>
            <person name="Lloyd C."/>
            <person name="Ainscough R."/>
            <person name="Almeida J.P."/>
            <person name="Ambrose K.D."/>
            <person name="Anderson F."/>
            <person name="Andrew R.W."/>
            <person name="Ashwell R.I.S."/>
            <person name="Aubin K."/>
            <person name="Babbage A.K."/>
            <person name="Bagguley C.L."/>
            <person name="Bailey J."/>
            <person name="Beasley H."/>
            <person name="Bethel G."/>
            <person name="Bird C.P."/>
            <person name="Bray-Allen S."/>
            <person name="Brown J.Y."/>
            <person name="Brown A.J."/>
            <person name="Buckley D."/>
            <person name="Burton J."/>
            <person name="Bye J."/>
            <person name="Carder C."/>
            <person name="Chapman J.C."/>
            <person name="Clark S.Y."/>
            <person name="Clarke G."/>
            <person name="Clee C."/>
            <person name="Cobley V."/>
            <person name="Collier R.E."/>
            <person name="Corby N."/>
            <person name="Coville G.J."/>
            <person name="Davies J."/>
            <person name="Deadman R."/>
            <person name="Dunn M."/>
            <person name="Earthrowl M."/>
            <person name="Ellington A.G."/>
            <person name="Errington H."/>
            <person name="Frankish A."/>
            <person name="Frankland J."/>
            <person name="French L."/>
            <person name="Garner P."/>
            <person name="Garnett J."/>
            <person name="Gay L."/>
            <person name="Ghori M.R.J."/>
            <person name="Gibson R."/>
            <person name="Gilby L.M."/>
            <person name="Gillett W."/>
            <person name="Glithero R.J."/>
            <person name="Grafham D.V."/>
            <person name="Griffiths C."/>
            <person name="Griffiths-Jones S."/>
            <person name="Grocock R."/>
            <person name="Hammond S."/>
            <person name="Harrison E.S.I."/>
            <person name="Hart E."/>
            <person name="Haugen E."/>
            <person name="Heath P.D."/>
            <person name="Holmes S."/>
            <person name="Holt K."/>
            <person name="Howden P.J."/>
            <person name="Hunt A.R."/>
            <person name="Hunt S.E."/>
            <person name="Hunter G."/>
            <person name="Isherwood J."/>
            <person name="James R."/>
            <person name="Johnson C."/>
            <person name="Johnson D."/>
            <person name="Joy A."/>
            <person name="Kay M."/>
            <person name="Kershaw J.K."/>
            <person name="Kibukawa M."/>
            <person name="Kimberley A.M."/>
            <person name="King A."/>
            <person name="Knights A.J."/>
            <person name="Lad H."/>
            <person name="Laird G."/>
            <person name="Lawlor S."/>
            <person name="Leongamornlert D.A."/>
            <person name="Lloyd D.M."/>
            <person name="Loveland J."/>
            <person name="Lovell J."/>
            <person name="Lush M.J."/>
            <person name="Lyne R."/>
            <person name="Martin S."/>
            <person name="Mashreghi-Mohammadi M."/>
            <person name="Matthews L."/>
            <person name="Matthews N.S.W."/>
            <person name="McLaren S."/>
            <person name="Milne S."/>
            <person name="Mistry S."/>
            <person name="Moore M.J.F."/>
            <person name="Nickerson T."/>
            <person name="O'Dell C.N."/>
            <person name="Oliver K."/>
            <person name="Palmeiri A."/>
            <person name="Palmer S.A."/>
            <person name="Parker A."/>
            <person name="Patel D."/>
            <person name="Pearce A.V."/>
            <person name="Peck A.I."/>
            <person name="Pelan S."/>
            <person name="Phelps K."/>
            <person name="Phillimore B.J."/>
            <person name="Plumb R."/>
            <person name="Rajan J."/>
            <person name="Raymond C."/>
            <person name="Rouse G."/>
            <person name="Saenphimmachak C."/>
            <person name="Sehra H.K."/>
            <person name="Sheridan E."/>
            <person name="Shownkeen R."/>
            <person name="Sims S."/>
            <person name="Skuce C.D."/>
            <person name="Smith M."/>
            <person name="Steward C."/>
            <person name="Subramanian S."/>
            <person name="Sycamore N."/>
            <person name="Tracey A."/>
            <person name="Tromans A."/>
            <person name="Van Helmond Z."/>
            <person name="Wall M."/>
            <person name="Wallis J.M."/>
            <person name="White S."/>
            <person name="Whitehead S.L."/>
            <person name="Wilkinson J.E."/>
            <person name="Willey D.L."/>
            <person name="Williams H."/>
            <person name="Wilming L."/>
            <person name="Wray P.W."/>
            <person name="Wu Z."/>
            <person name="Coulson A."/>
            <person name="Vaudin M."/>
            <person name="Sulston J.E."/>
            <person name="Durbin R.M."/>
            <person name="Hubbard T."/>
            <person name="Wooster R."/>
            <person name="Dunham I."/>
            <person name="Carter N.P."/>
            <person name="McVean G."/>
            <person name="Ross M.T."/>
            <person name="Harrow J."/>
            <person name="Olson M.V."/>
            <person name="Beck S."/>
            <person name="Rogers J."/>
            <person name="Bentley D.R."/>
        </authorList>
    </citation>
    <scope>NUCLEOTIDE SEQUENCE [LARGE SCALE GENOMIC DNA]</scope>
</reference>
<reference key="3">
    <citation type="submission" date="2005-07" db="EMBL/GenBank/DDBJ databases">
        <authorList>
            <person name="Mural R.J."/>
            <person name="Istrail S."/>
            <person name="Sutton G.G."/>
            <person name="Florea L."/>
            <person name="Halpern A.L."/>
            <person name="Mobarry C.M."/>
            <person name="Lippert R."/>
            <person name="Walenz B."/>
            <person name="Shatkay H."/>
            <person name="Dew I."/>
            <person name="Miller J.R."/>
            <person name="Flanigan M.J."/>
            <person name="Edwards N.J."/>
            <person name="Bolanos R."/>
            <person name="Fasulo D."/>
            <person name="Halldorsson B.V."/>
            <person name="Hannenhalli S."/>
            <person name="Turner R."/>
            <person name="Yooseph S."/>
            <person name="Lu F."/>
            <person name="Nusskern D.R."/>
            <person name="Shue B.C."/>
            <person name="Zheng X.H."/>
            <person name="Zhong F."/>
            <person name="Delcher A.L."/>
            <person name="Huson D.H."/>
            <person name="Kravitz S.A."/>
            <person name="Mouchard L."/>
            <person name="Reinert K."/>
            <person name="Remington K.A."/>
            <person name="Clark A.G."/>
            <person name="Waterman M.S."/>
            <person name="Eichler E.E."/>
            <person name="Adams M.D."/>
            <person name="Hunkapiller M.W."/>
            <person name="Myers E.W."/>
            <person name="Venter J.C."/>
        </authorList>
    </citation>
    <scope>NUCLEOTIDE SEQUENCE [LARGE SCALE GENOMIC DNA]</scope>
</reference>
<reference key="4">
    <citation type="journal article" date="2004" name="Genome Res.">
        <title>The status, quality, and expansion of the NIH full-length cDNA project: the Mammalian Gene Collection (MGC).</title>
        <authorList>
            <consortium name="The MGC Project Team"/>
        </authorList>
    </citation>
    <scope>NUCLEOTIDE SEQUENCE [LARGE SCALE MRNA] (ISOFORM 2)</scope>
    <scope>VARIANTS GLY-528 AND GLN-1124</scope>
    <source>
        <tissue>Brain</tissue>
        <tissue>Colon</tissue>
    </source>
</reference>
<reference key="5">
    <citation type="journal article" date="2007" name="BMC Genomics">
        <title>The full-ORF clone resource of the German cDNA consortium.</title>
        <authorList>
            <person name="Bechtel S."/>
            <person name="Rosenfelder H."/>
            <person name="Duda A."/>
            <person name="Schmidt C.P."/>
            <person name="Ernst U."/>
            <person name="Wellenreuther R."/>
            <person name="Mehrle A."/>
            <person name="Schuster C."/>
            <person name="Bahr A."/>
            <person name="Bloecker H."/>
            <person name="Heubner D."/>
            <person name="Hoerlein A."/>
            <person name="Michel G."/>
            <person name="Wedler H."/>
            <person name="Koehrer K."/>
            <person name="Ottenwaelder B."/>
            <person name="Poustka A."/>
            <person name="Wiemann S."/>
            <person name="Schupp I."/>
        </authorList>
    </citation>
    <scope>NUCLEOTIDE SEQUENCE [LARGE SCALE MRNA] OF 1-1401 (ISOFORM 1)</scope>
    <scope>VARIANTS HIS-258; MET-266; THR-344; GLY-528; ARG-662 AND SER-853</scope>
    <source>
        <tissue>Skeletal muscle</tissue>
    </source>
</reference>
<proteinExistence type="evidence at protein level"/>
<protein>
    <recommendedName>
        <fullName>Myomesin-3</fullName>
    </recommendedName>
    <alternativeName>
        <fullName>Myomesin family member 3</fullName>
    </alternativeName>
</protein>
<feature type="chain" id="PRO_0000315394" description="Myomesin-3">
    <location>
        <begin position="1"/>
        <end position="1437"/>
    </location>
</feature>
<feature type="domain" description="Ig-like C2-type 1">
    <location>
        <begin position="154"/>
        <end position="246"/>
    </location>
</feature>
<feature type="domain" description="Ig-like C2-type 2">
    <location>
        <begin position="269"/>
        <end position="361"/>
    </location>
</feature>
<feature type="domain" description="Fibronectin type-III 1" evidence="3">
    <location>
        <begin position="375"/>
        <end position="469"/>
    </location>
</feature>
<feature type="domain" description="Fibronectin type-III 2" evidence="3">
    <location>
        <begin position="503"/>
        <end position="598"/>
    </location>
</feature>
<feature type="domain" description="Fibronectin type-III 3" evidence="3">
    <location>
        <begin position="604"/>
        <end position="696"/>
    </location>
</feature>
<feature type="domain" description="Fibronectin type-III 4" evidence="3">
    <location>
        <begin position="702"/>
        <end position="797"/>
    </location>
</feature>
<feature type="domain" description="Fibronectin type-III 5" evidence="3">
    <location>
        <begin position="804"/>
        <end position="899"/>
    </location>
</feature>
<feature type="domain" description="Ig-like C2-type 3">
    <location>
        <begin position="1120"/>
        <end position="1205"/>
    </location>
</feature>
<feature type="domain" description="Ig-like C2-type 4">
    <location>
        <begin position="1334"/>
        <end position="1423"/>
    </location>
</feature>
<feature type="region of interest" description="Disordered" evidence="4">
    <location>
        <begin position="1"/>
        <end position="49"/>
    </location>
</feature>
<feature type="coiled-coil region" evidence="2">
    <location>
        <begin position="120"/>
        <end position="149"/>
    </location>
</feature>
<feature type="compositionally biased region" description="Basic and acidic residues" evidence="4">
    <location>
        <begin position="20"/>
        <end position="38"/>
    </location>
</feature>
<feature type="splice variant" id="VSP_030542" description="In isoform 3." evidence="8">
    <location>
        <begin position="1"/>
        <end position="1107"/>
    </location>
</feature>
<feature type="splice variant" id="VSP_030543" description="In isoform 3." evidence="8">
    <original>DAKRRDWKRKQGPYFERPLQWKVTEDCQVQLTCK</original>
    <variation>MDISKKNRVRQGSRGRGKTISKNSESRGQQRRHM</variation>
    <location>
        <begin position="1108"/>
        <end position="1141"/>
    </location>
</feature>
<feature type="splice variant" id="VSP_030544" description="In isoform 2." evidence="9">
    <original>LSKKDKGIYRAMVSDDRGEDDTILDLTGDALDAI</original>
    <variation>ASVAPASGLTFSFGCKPGRAKSSGLGVRAGPRLG</variation>
    <location>
        <begin position="1179"/>
        <end position="1212"/>
    </location>
</feature>
<feature type="splice variant" id="VSP_030545" description="In isoform 2." evidence="9">
    <location>
        <begin position="1213"/>
        <end position="1437"/>
    </location>
</feature>
<feature type="sequence variant" id="VAR_049910" description="In dbSNP:rs4319261." evidence="7">
    <original>D</original>
    <variation>H</variation>
    <location>
        <position position="258"/>
    </location>
</feature>
<feature type="sequence variant" id="VAR_038179" description="In dbSNP:rs6678540." evidence="5 7">
    <original>T</original>
    <variation>M</variation>
    <location>
        <position position="266"/>
    </location>
</feature>
<feature type="sequence variant" id="VAR_038180" description="In dbSNP:rs4233050." evidence="5 7">
    <original>M</original>
    <variation>T</variation>
    <location>
        <position position="344"/>
    </location>
</feature>
<feature type="sequence variant" id="VAR_038181" description="In dbSNP:rs6700245." evidence="5">
    <original>Q</original>
    <variation>R</variation>
    <location>
        <position position="435"/>
    </location>
</feature>
<feature type="sequence variant" id="VAR_038182" description="In dbSNP:rs4393101." evidence="5 6 7">
    <original>D</original>
    <variation>G</variation>
    <location>
        <position position="528"/>
    </location>
</feature>
<feature type="sequence variant" id="VAR_038183" description="In dbSNP:rs4320729." evidence="5 7">
    <original>G</original>
    <variation>R</variation>
    <location>
        <position position="662"/>
    </location>
</feature>
<feature type="sequence variant" id="VAR_038184" description="In dbSNP:rs12082295.">
    <original>R</original>
    <variation>Q</variation>
    <location>
        <position position="775"/>
    </location>
</feature>
<feature type="sequence variant" id="VAR_038185" description="In dbSNP:rs35446243." evidence="7">
    <original>P</original>
    <variation>S</variation>
    <location>
        <position position="853"/>
    </location>
</feature>
<feature type="sequence variant" id="VAR_038186" description="In dbSNP:rs36077733.">
    <original>D</original>
    <variation>A</variation>
    <location>
        <position position="892"/>
    </location>
</feature>
<feature type="sequence variant" id="VAR_038187" description="In dbSNP:rs16829083.">
    <original>F</original>
    <variation>L</variation>
    <location>
        <position position="1041"/>
    </location>
</feature>
<feature type="sequence variant" id="VAR_038188" description="In dbSNP:rs12145360.">
    <original>I</original>
    <variation>T</variation>
    <location>
        <position position="1066"/>
    </location>
</feature>
<feature type="sequence variant" id="VAR_038189" description="In dbSNP:rs16829071." evidence="6">
    <original>R</original>
    <variation>Q</variation>
    <location>
        <position position="1124"/>
    </location>
</feature>
<feature type="sequence conflict" description="In Ref. 1; BAC87343." evidence="10" ref="1">
    <original>Q</original>
    <variation>R</variation>
    <location>
        <position position="1083"/>
    </location>
</feature>
<feature type="sequence conflict" description="In Ref. 5; CAH10376." evidence="10" ref="5">
    <original>N</original>
    <variation>D</variation>
    <location>
        <position position="1246"/>
    </location>
</feature>
<feature type="sequence conflict" description="In Ref. 5; CAH10376." evidence="10" ref="5">
    <original>A</original>
    <variation>T</variation>
    <location>
        <position position="1344"/>
    </location>
</feature>
<feature type="sequence conflict" description="In Ref. 1; BAC04119." evidence="10" ref="1">
    <original>K</original>
    <variation>R</variation>
    <location>
        <position position="1350"/>
    </location>
</feature>
<feature type="sequence conflict" description="In Ref. 1; BAC04119." evidence="10" ref="1">
    <original>G</original>
    <variation>V</variation>
    <location>
        <position position="1414"/>
    </location>
</feature>
<gene>
    <name type="primary">MYOM3</name>
</gene>
<accession>Q5VTT5</accession>
<accession>A6NF75</accession>
<accession>Q5VTT6</accession>
<accession>Q6AWC0</accession>
<accession>Q6AWC1</accession>
<accession>Q6NXF9</accession>
<accession>Q6ZRG7</accession>
<accession>Q7Z3G9</accession>
<accession>Q8NA11</accession>
<accession>Q96C54</accession>
<comment type="function">
    <text evidence="1">May link the intermediate filament cytoskeleton to the M-disk of the myofibrils in striated muscle.</text>
</comment>
<comment type="subunit">
    <text evidence="1">Homodimer.</text>
</comment>
<comment type="interaction">
    <interactant intactId="EBI-12247808">
        <id>Q5VTT5-2</id>
    </interactant>
    <interactant intactId="EBI-2515349">
        <id>Q9BSK4</id>
        <label>FEM1A</label>
    </interactant>
    <organismsDiffer>false</organismsDiffer>
    <experiments>3</experiments>
</comment>
<comment type="interaction">
    <interactant intactId="EBI-12247808">
        <id>Q5VTT5-2</id>
    </interactant>
    <interactant intactId="EBI-618309">
        <id>Q08379</id>
        <label>GOLGA2</label>
    </interactant>
    <organismsDiffer>false</organismsDiffer>
    <experiments>3</experiments>
</comment>
<comment type="interaction">
    <interactant intactId="EBI-12247808">
        <id>Q5VTT5-2</id>
    </interactant>
    <interactant intactId="EBI-739467">
        <id>Q9H8Y8</id>
        <label>GORASP2</label>
    </interactant>
    <organismsDiffer>false</organismsDiffer>
    <experiments>3</experiments>
</comment>
<comment type="interaction">
    <interactant intactId="EBI-12247808">
        <id>Q5VTT5-2</id>
    </interactant>
    <interactant intactId="EBI-372942">
        <id>Q13287</id>
        <label>NMI</label>
    </interactant>
    <organismsDiffer>false</organismsDiffer>
    <experiments>6</experiments>
</comment>
<comment type="subcellular location">
    <subcellularLocation>
        <location evidence="1">Cytoplasm</location>
        <location evidence="1">Myofibril</location>
        <location evidence="1">Sarcomere</location>
        <location evidence="1">M line</location>
    </subcellularLocation>
</comment>
<comment type="alternative products">
    <event type="alternative splicing"/>
    <isoform>
        <id>Q5VTT5-1</id>
        <name>1</name>
        <sequence type="displayed"/>
    </isoform>
    <isoform>
        <id>Q5VTT5-2</id>
        <name>2</name>
        <sequence type="described" ref="VSP_030544 VSP_030545"/>
    </isoform>
    <isoform>
        <id>Q5VTT5-3</id>
        <name>3</name>
        <sequence type="described" ref="VSP_030542 VSP_030543"/>
    </isoform>
</comment>
<dbReference type="EMBL" id="AK093280">
    <property type="protein sequence ID" value="BAC04119.1"/>
    <property type="molecule type" value="mRNA"/>
</dbReference>
<dbReference type="EMBL" id="AK128233">
    <property type="protein sequence ID" value="BAC87343.1"/>
    <property type="molecule type" value="mRNA"/>
</dbReference>
<dbReference type="EMBL" id="AL591178">
    <property type="status" value="NOT_ANNOTATED_CDS"/>
    <property type="molecule type" value="Genomic_DNA"/>
</dbReference>
<dbReference type="EMBL" id="CH471134">
    <property type="protein sequence ID" value="EAW95108.1"/>
    <property type="molecule type" value="Genomic_DNA"/>
</dbReference>
<dbReference type="EMBL" id="BC014671">
    <property type="protein sequence ID" value="AAH14671.1"/>
    <property type="molecule type" value="mRNA"/>
</dbReference>
<dbReference type="EMBL" id="BC067101">
    <property type="protein sequence ID" value="AAH67101.1"/>
    <property type="molecule type" value="mRNA"/>
</dbReference>
<dbReference type="EMBL" id="BX537911">
    <property type="protein sequence ID" value="CAD97895.1"/>
    <property type="molecule type" value="mRNA"/>
</dbReference>
<dbReference type="EMBL" id="BX647453">
    <property type="protein sequence ID" value="CAH10377.1"/>
    <property type="molecule type" value="mRNA"/>
</dbReference>
<dbReference type="EMBL" id="BX647455">
    <property type="protein sequence ID" value="CAH10376.1"/>
    <property type="molecule type" value="mRNA"/>
</dbReference>
<dbReference type="CCDS" id="CCDS41281.1">
    <molecule id="Q5VTT5-1"/>
</dbReference>
<dbReference type="RefSeq" id="NP_689585.3">
    <molecule id="Q5VTT5-1"/>
    <property type="nucleotide sequence ID" value="NM_152372.3"/>
</dbReference>
<dbReference type="SMR" id="Q5VTT5"/>
<dbReference type="BioGRID" id="126050">
    <property type="interactions" value="9"/>
</dbReference>
<dbReference type="FunCoup" id="Q5VTT5">
    <property type="interactions" value="17"/>
</dbReference>
<dbReference type="IntAct" id="Q5VTT5">
    <property type="interactions" value="7"/>
</dbReference>
<dbReference type="STRING" id="9606.ENSP00000363557"/>
<dbReference type="GlyGen" id="Q5VTT5">
    <property type="glycosylation" value="4 sites, 1 O-linked glycan (1 site)"/>
</dbReference>
<dbReference type="iPTMnet" id="Q5VTT5"/>
<dbReference type="PhosphoSitePlus" id="Q5VTT5"/>
<dbReference type="SwissPalm" id="Q5VTT5"/>
<dbReference type="BioMuta" id="MYOM3"/>
<dbReference type="DMDM" id="74762257"/>
<dbReference type="MassIVE" id="Q5VTT5"/>
<dbReference type="PaxDb" id="9606-ENSP00000363557"/>
<dbReference type="PeptideAtlas" id="Q5VTT5"/>
<dbReference type="ProteomicsDB" id="65352">
    <molecule id="Q5VTT5-1"/>
</dbReference>
<dbReference type="ProteomicsDB" id="65353">
    <molecule id="Q5VTT5-2"/>
</dbReference>
<dbReference type="ProteomicsDB" id="65354">
    <molecule id="Q5VTT5-3"/>
</dbReference>
<dbReference type="Antibodypedia" id="30256">
    <property type="antibodies" value="64 antibodies from 19 providers"/>
</dbReference>
<dbReference type="DNASU" id="127294"/>
<dbReference type="Ensembl" id="ENST00000338909.9">
    <molecule id="Q5VTT5-3"/>
    <property type="protein sequence ID" value="ENSP00000342689.5"/>
    <property type="gene ID" value="ENSG00000142661.19"/>
</dbReference>
<dbReference type="Ensembl" id="ENST00000374434.4">
    <molecule id="Q5VTT5-1"/>
    <property type="protein sequence ID" value="ENSP00000363557.3"/>
    <property type="gene ID" value="ENSG00000142661.19"/>
</dbReference>
<dbReference type="GeneID" id="127294"/>
<dbReference type="KEGG" id="hsa:127294"/>
<dbReference type="MANE-Select" id="ENST00000374434.4">
    <property type="protein sequence ID" value="ENSP00000363557.3"/>
    <property type="RefSeq nucleotide sequence ID" value="NM_152372.4"/>
    <property type="RefSeq protein sequence ID" value="NP_689585.3"/>
</dbReference>
<dbReference type="UCSC" id="uc001bil.5">
    <molecule id="Q5VTT5-1"/>
    <property type="organism name" value="human"/>
</dbReference>
<dbReference type="AGR" id="HGNC:26679"/>
<dbReference type="CTD" id="127294"/>
<dbReference type="DisGeNET" id="127294"/>
<dbReference type="GeneCards" id="MYOM3"/>
<dbReference type="HGNC" id="HGNC:26679">
    <property type="gene designation" value="MYOM3"/>
</dbReference>
<dbReference type="HPA" id="ENSG00000142661">
    <property type="expression patterns" value="Group enriched (heart muscle, skeletal muscle, tongue)"/>
</dbReference>
<dbReference type="neXtProt" id="NX_Q5VTT5"/>
<dbReference type="OpenTargets" id="ENSG00000142661"/>
<dbReference type="PharmGKB" id="PA134899390"/>
<dbReference type="VEuPathDB" id="HostDB:ENSG00000142661"/>
<dbReference type="eggNOG" id="ENOG502RDUJ">
    <property type="taxonomic scope" value="Eukaryota"/>
</dbReference>
<dbReference type="GeneTree" id="ENSGT00940000158669"/>
<dbReference type="HOGENOM" id="CLU_854026_0_0_1"/>
<dbReference type="InParanoid" id="Q5VTT5"/>
<dbReference type="OMA" id="VTNTNKD"/>
<dbReference type="OrthoDB" id="9936265at2759"/>
<dbReference type="PAN-GO" id="Q5VTT5">
    <property type="GO annotations" value="3 GO annotations based on evolutionary models"/>
</dbReference>
<dbReference type="PhylomeDB" id="Q5VTT5"/>
<dbReference type="TreeFam" id="TF331825"/>
<dbReference type="PathwayCommons" id="Q5VTT5"/>
<dbReference type="SignaLink" id="Q5VTT5"/>
<dbReference type="BioGRID-ORCS" id="127294">
    <property type="hits" value="11 hits in 1145 CRISPR screens"/>
</dbReference>
<dbReference type="GenomeRNAi" id="127294"/>
<dbReference type="Pharos" id="Q5VTT5">
    <property type="development level" value="Tbio"/>
</dbReference>
<dbReference type="PRO" id="PR:Q5VTT5"/>
<dbReference type="Proteomes" id="UP000005640">
    <property type="component" value="Chromosome 1"/>
</dbReference>
<dbReference type="RNAct" id="Q5VTT5">
    <property type="molecule type" value="protein"/>
</dbReference>
<dbReference type="Bgee" id="ENSG00000142661">
    <property type="expression patterns" value="Expressed in apex of heart and 133 other cell types or tissues"/>
</dbReference>
<dbReference type="GO" id="GO:0031430">
    <property type="term" value="C:M band"/>
    <property type="evidence" value="ECO:0000250"/>
    <property type="project" value="UniProtKB"/>
</dbReference>
<dbReference type="GO" id="GO:0042803">
    <property type="term" value="F:protein homodimerization activity"/>
    <property type="evidence" value="ECO:0000250"/>
    <property type="project" value="UniProtKB"/>
</dbReference>
<dbReference type="GO" id="GO:0045214">
    <property type="term" value="P:sarcomere organization"/>
    <property type="evidence" value="ECO:0000318"/>
    <property type="project" value="GO_Central"/>
</dbReference>
<dbReference type="CDD" id="cd00063">
    <property type="entry name" value="FN3"/>
    <property type="match status" value="5"/>
</dbReference>
<dbReference type="FunFam" id="2.60.40.10:FF:000069">
    <property type="entry name" value="Alpha-protein kinase 3"/>
    <property type="match status" value="1"/>
</dbReference>
<dbReference type="FunFam" id="2.60.40.10:FF:000029">
    <property type="entry name" value="Myomesin 1"/>
    <property type="match status" value="3"/>
</dbReference>
<dbReference type="FunFam" id="2.60.40.10:FF:000124">
    <property type="entry name" value="Myomesin 1"/>
    <property type="match status" value="1"/>
</dbReference>
<dbReference type="FunFam" id="2.60.40.10:FF:000134">
    <property type="entry name" value="Myomesin 1"/>
    <property type="match status" value="1"/>
</dbReference>
<dbReference type="FunFam" id="2.60.40.10:FF:000192">
    <property type="entry name" value="Myomesin 1"/>
    <property type="match status" value="1"/>
</dbReference>
<dbReference type="FunFam" id="2.60.40.10:FF:000197">
    <property type="entry name" value="Myomesin 1"/>
    <property type="match status" value="1"/>
</dbReference>
<dbReference type="FunFam" id="2.60.40.10:FF:000233">
    <property type="entry name" value="Myomesin 1"/>
    <property type="match status" value="1"/>
</dbReference>
<dbReference type="FunFam" id="2.60.40.10:FF:000745">
    <property type="entry name" value="Myomesin 3"/>
    <property type="match status" value="1"/>
</dbReference>
<dbReference type="FunFam" id="2.60.40.10:FF:000821">
    <property type="entry name" value="Myomesin 3"/>
    <property type="match status" value="1"/>
</dbReference>
<dbReference type="FunFam" id="2.60.40.10:FF:001351">
    <property type="entry name" value="Myomesin 3"/>
    <property type="match status" value="1"/>
</dbReference>
<dbReference type="Gene3D" id="2.60.40.10">
    <property type="entry name" value="Immunoglobulins"/>
    <property type="match status" value="12"/>
</dbReference>
<dbReference type="InterPro" id="IPR003961">
    <property type="entry name" value="FN3_dom"/>
</dbReference>
<dbReference type="InterPro" id="IPR036116">
    <property type="entry name" value="FN3_sf"/>
</dbReference>
<dbReference type="InterPro" id="IPR007110">
    <property type="entry name" value="Ig-like_dom"/>
</dbReference>
<dbReference type="InterPro" id="IPR036179">
    <property type="entry name" value="Ig-like_dom_sf"/>
</dbReference>
<dbReference type="InterPro" id="IPR013783">
    <property type="entry name" value="Ig-like_fold"/>
</dbReference>
<dbReference type="InterPro" id="IPR013098">
    <property type="entry name" value="Ig_I-set"/>
</dbReference>
<dbReference type="InterPro" id="IPR003599">
    <property type="entry name" value="Ig_sub"/>
</dbReference>
<dbReference type="InterPro" id="IPR003598">
    <property type="entry name" value="Ig_sub2"/>
</dbReference>
<dbReference type="InterPro" id="IPR050964">
    <property type="entry name" value="Striated_Muscle_Regulatory"/>
</dbReference>
<dbReference type="PANTHER" id="PTHR13817:SF166">
    <property type="entry name" value="NEURONAL IGCAM-RELATED"/>
    <property type="match status" value="1"/>
</dbReference>
<dbReference type="PANTHER" id="PTHR13817">
    <property type="entry name" value="TITIN"/>
    <property type="match status" value="1"/>
</dbReference>
<dbReference type="Pfam" id="PF00041">
    <property type="entry name" value="fn3"/>
    <property type="match status" value="5"/>
</dbReference>
<dbReference type="Pfam" id="PF07679">
    <property type="entry name" value="I-set"/>
    <property type="match status" value="4"/>
</dbReference>
<dbReference type="PRINTS" id="PR00014">
    <property type="entry name" value="FNTYPEIII"/>
</dbReference>
<dbReference type="SMART" id="SM00060">
    <property type="entry name" value="FN3"/>
    <property type="match status" value="5"/>
</dbReference>
<dbReference type="SMART" id="SM00409">
    <property type="entry name" value="IG"/>
    <property type="match status" value="5"/>
</dbReference>
<dbReference type="SMART" id="SM00408">
    <property type="entry name" value="IGc2"/>
    <property type="match status" value="3"/>
</dbReference>
<dbReference type="SUPFAM" id="SSF49265">
    <property type="entry name" value="Fibronectin type III"/>
    <property type="match status" value="3"/>
</dbReference>
<dbReference type="SUPFAM" id="SSF48726">
    <property type="entry name" value="Immunoglobulin"/>
    <property type="match status" value="6"/>
</dbReference>
<dbReference type="PROSITE" id="PS50853">
    <property type="entry name" value="FN3"/>
    <property type="match status" value="5"/>
</dbReference>
<dbReference type="PROSITE" id="PS50835">
    <property type="entry name" value="IG_LIKE"/>
    <property type="match status" value="4"/>
</dbReference>
<keyword id="KW-0025">Alternative splicing</keyword>
<keyword id="KW-0175">Coiled coil</keyword>
<keyword id="KW-0963">Cytoplasm</keyword>
<keyword id="KW-0393">Immunoglobulin domain</keyword>
<keyword id="KW-1267">Proteomics identification</keyword>
<keyword id="KW-1185">Reference proteome</keyword>
<keyword id="KW-0677">Repeat</keyword>
<organism>
    <name type="scientific">Homo sapiens</name>
    <name type="common">Human</name>
    <dbReference type="NCBI Taxonomy" id="9606"/>
    <lineage>
        <taxon>Eukaryota</taxon>
        <taxon>Metazoa</taxon>
        <taxon>Chordata</taxon>
        <taxon>Craniata</taxon>
        <taxon>Vertebrata</taxon>
        <taxon>Euteleostomi</taxon>
        <taxon>Mammalia</taxon>
        <taxon>Eutheria</taxon>
        <taxon>Euarchontoglires</taxon>
        <taxon>Primates</taxon>
        <taxon>Haplorrhini</taxon>
        <taxon>Catarrhini</taxon>
        <taxon>Hominidae</taxon>
        <taxon>Homo</taxon>
    </lineage>
</organism>
<sequence length="1437" mass="162189">MTLPHSLGGAGDPRPPQAMEVHRLEHRQEEEQKEERQHSLRMGSSVRRRTFRSSEEEHEFSAADYALAAALALTASSELSWEAQLRRQTSAVELEERGQKRVGFGNDWERTEIAFLQTHRLLRQRRDWKTLRRRTEEKVQEAKELRELCYGRGPWFWIPLRSHAVWEHTTVLLTCTVQASPPPQVTWYKNDTRIDPRLFRAGKYRITNNYGLLSLEIRRCAIEDSATYTVRVKNAHGQASSFAKVLVRTYLGKDAGFDSEIFKRSTFGPSVEFTSVLKPVFAREKEPFSLSCLFSEDVLDAESIQWFRDGSLLRSSRRRKILYTDRQASLKVSCTYKEDEGLYMVRVPSPFGPREQSTYVLVRDAEAENPGAPGSPLNVRCLDVNRDCLILTWAPPSDTRGNPITAYTIERCQGESGEWIACHEAPGGTCRCPIQGLVEGQSYRFRVRAISRVGSSVPSKASELVVMGDHDAARRKTEIPFDLGNKITISTDAFEDTVTIPSPPTNVHASEIREAYVVLAWEEPSPRDRAPLTYSLEKSVIGSGTWEAISSESPVRSPRFAVLDLEKKKSYVFRVRAMNQYGLSDPSEPSEPIALRGPPATLPPPAQVQAFRDTQTSVSLTWDPVKDPELLGYYIYSRKVGTSEWQTVNNKPIQGTRFTVPGLRTGKEYEFCVRSVSEAGVGESSAATEPIRVKQALATPSAPYGFALLNCGKNEMVIGWKPPKRRGGGKILGYFLDQHDSEELDWHAVNQQPIPTRVCKVSDLHEGHFYEFRARAANWAGVGELSAPSSLFECKEWTMPQPGPPYDVRASEVRATSLVLQWEPPLYMGAGPVTGYHVSFQEEGSEQWKPVTPGPISGTHLRVSDLQPGKSYVFQVQAMNSAGLGQPSMPTDPVLLEDKPGAHEIEVGVDEEGFIYLAFEAPEAPDSSEFQWSKDYKGPLDPQRVKIEDKVNKSKVILKEPGLEDLGTYSVIVTDADEDISASHTLTEEELEKLKKLSHEIRNPVIKLISGWNIDILERGEVRLWLEVEKLSPAAELHLIFNNKEIFSSPNRKINFDREKGLVEVIIQNLSEEDKGSYTAQLQDGKAKNQITLTLVDDDFDKLLRKADAKRRDWKRKQGPYFERPLQWKVTEDCQVQLTCKVTNTKKETRFQWFFQRAEMPDGQYDPETGTGLLCIEELSKKDKGIYRAMVSDDRGEDDTILDLTGDALDAIFTELGRIGALSATPLKIQGTEEGIRIFSKVKYYNVEYMKTTWFHKDKRLESGDRIRTGTTLDEIWLHILDPKDSDKGKYTLEIAAGKEVRQLSTDLSGQAFEDAMAEHQRLKTLAIIEKNRAKVVRGLPDVATIMEDKTLCLTCIVSGDPTPEISWLKNDQPVTFLDRYRMEVRGTEVTITIEKVNSEDSGRYGVFVKNKYGSETGQVTISVFKHGDEPKELKSM</sequence>
<name>MYOM3_HUMAN</name>
<evidence type="ECO:0000250" key="1"/>
<evidence type="ECO:0000255" key="2"/>
<evidence type="ECO:0000255" key="3">
    <source>
        <dbReference type="PROSITE-ProRule" id="PRU00316"/>
    </source>
</evidence>
<evidence type="ECO:0000256" key="4">
    <source>
        <dbReference type="SAM" id="MobiDB-lite"/>
    </source>
</evidence>
<evidence type="ECO:0000269" key="5">
    <source>
    </source>
</evidence>
<evidence type="ECO:0000269" key="6">
    <source>
    </source>
</evidence>
<evidence type="ECO:0000269" key="7">
    <source>
    </source>
</evidence>
<evidence type="ECO:0000303" key="8">
    <source>
    </source>
</evidence>
<evidence type="ECO:0000303" key="9">
    <source>
    </source>
</evidence>
<evidence type="ECO:0000305" key="10"/>